<gene>
    <name type="primary">Dnajc4</name>
    <name type="synonym">Mcg18</name>
</gene>
<evidence type="ECO:0000255" key="1"/>
<evidence type="ECO:0000255" key="2">
    <source>
        <dbReference type="PROSITE-ProRule" id="PRU00286"/>
    </source>
</evidence>
<evidence type="ECO:0000256" key="3">
    <source>
        <dbReference type="SAM" id="MobiDB-lite"/>
    </source>
</evidence>
<evidence type="ECO:0000305" key="4"/>
<name>DNJC4_MOUSE</name>
<sequence>MPSLLLQLPLRLCRLWPHSLSIRLLTAATGQRSVPTNYYELLGVHPGASAEEIKRAFFTKSKELHPDRDPGNPALHSRFVELNEAYRVLSREESRRNYDHQLHSASPPKSSGSTAEPKYTQQTHSSWEPPNAQYWAQFHSVRPQGPESRKQQRKHNQRVLGYCLLLMVAGMGLHYVAFRKLEQVHRSFMDEKDRIITAIYNDTRARARANRARIQQERQQRQQPRAEPSLPPESSRIMPQDTSP</sequence>
<comment type="subcellular location">
    <subcellularLocation>
        <location evidence="4">Membrane</location>
        <topology evidence="4">Single-pass membrane protein</topology>
    </subcellularLocation>
</comment>
<organism>
    <name type="scientific">Mus musculus</name>
    <name type="common">Mouse</name>
    <dbReference type="NCBI Taxonomy" id="10090"/>
    <lineage>
        <taxon>Eukaryota</taxon>
        <taxon>Metazoa</taxon>
        <taxon>Chordata</taxon>
        <taxon>Craniata</taxon>
        <taxon>Vertebrata</taxon>
        <taxon>Euteleostomi</taxon>
        <taxon>Mammalia</taxon>
        <taxon>Eutheria</taxon>
        <taxon>Euarchontoglires</taxon>
        <taxon>Glires</taxon>
        <taxon>Rodentia</taxon>
        <taxon>Myomorpha</taxon>
        <taxon>Muroidea</taxon>
        <taxon>Muridae</taxon>
        <taxon>Murinae</taxon>
        <taxon>Mus</taxon>
        <taxon>Mus</taxon>
    </lineage>
</organism>
<proteinExistence type="evidence at transcript level"/>
<reference key="1">
    <citation type="journal article" date="1998" name="Biochem. Biophys. Res. Commun.">
        <title>Characterisation of a new human and murine member of the DnaJ family of proteins.</title>
        <authorList>
            <person name="Silins G."/>
            <person name="Grimmond S."/>
            <person name="Hayward N."/>
        </authorList>
    </citation>
    <scope>NUCLEOTIDE SEQUENCE [MRNA]</scope>
</reference>
<reference key="2">
    <citation type="journal article" date="2005" name="Science">
        <title>The transcriptional landscape of the mammalian genome.</title>
        <authorList>
            <person name="Carninci P."/>
            <person name="Kasukawa T."/>
            <person name="Katayama S."/>
            <person name="Gough J."/>
            <person name="Frith M.C."/>
            <person name="Maeda N."/>
            <person name="Oyama R."/>
            <person name="Ravasi T."/>
            <person name="Lenhard B."/>
            <person name="Wells C."/>
            <person name="Kodzius R."/>
            <person name="Shimokawa K."/>
            <person name="Bajic V.B."/>
            <person name="Brenner S.E."/>
            <person name="Batalov S."/>
            <person name="Forrest A.R."/>
            <person name="Zavolan M."/>
            <person name="Davis M.J."/>
            <person name="Wilming L.G."/>
            <person name="Aidinis V."/>
            <person name="Allen J.E."/>
            <person name="Ambesi-Impiombato A."/>
            <person name="Apweiler R."/>
            <person name="Aturaliya R.N."/>
            <person name="Bailey T.L."/>
            <person name="Bansal M."/>
            <person name="Baxter L."/>
            <person name="Beisel K.W."/>
            <person name="Bersano T."/>
            <person name="Bono H."/>
            <person name="Chalk A.M."/>
            <person name="Chiu K.P."/>
            <person name="Choudhary V."/>
            <person name="Christoffels A."/>
            <person name="Clutterbuck D.R."/>
            <person name="Crowe M.L."/>
            <person name="Dalla E."/>
            <person name="Dalrymple B.P."/>
            <person name="de Bono B."/>
            <person name="Della Gatta G."/>
            <person name="di Bernardo D."/>
            <person name="Down T."/>
            <person name="Engstrom P."/>
            <person name="Fagiolini M."/>
            <person name="Faulkner G."/>
            <person name="Fletcher C.F."/>
            <person name="Fukushima T."/>
            <person name="Furuno M."/>
            <person name="Futaki S."/>
            <person name="Gariboldi M."/>
            <person name="Georgii-Hemming P."/>
            <person name="Gingeras T.R."/>
            <person name="Gojobori T."/>
            <person name="Green R.E."/>
            <person name="Gustincich S."/>
            <person name="Harbers M."/>
            <person name="Hayashi Y."/>
            <person name="Hensch T.K."/>
            <person name="Hirokawa N."/>
            <person name="Hill D."/>
            <person name="Huminiecki L."/>
            <person name="Iacono M."/>
            <person name="Ikeo K."/>
            <person name="Iwama A."/>
            <person name="Ishikawa T."/>
            <person name="Jakt M."/>
            <person name="Kanapin A."/>
            <person name="Katoh M."/>
            <person name="Kawasawa Y."/>
            <person name="Kelso J."/>
            <person name="Kitamura H."/>
            <person name="Kitano H."/>
            <person name="Kollias G."/>
            <person name="Krishnan S.P."/>
            <person name="Kruger A."/>
            <person name="Kummerfeld S.K."/>
            <person name="Kurochkin I.V."/>
            <person name="Lareau L.F."/>
            <person name="Lazarevic D."/>
            <person name="Lipovich L."/>
            <person name="Liu J."/>
            <person name="Liuni S."/>
            <person name="McWilliam S."/>
            <person name="Madan Babu M."/>
            <person name="Madera M."/>
            <person name="Marchionni L."/>
            <person name="Matsuda H."/>
            <person name="Matsuzawa S."/>
            <person name="Miki H."/>
            <person name="Mignone F."/>
            <person name="Miyake S."/>
            <person name="Morris K."/>
            <person name="Mottagui-Tabar S."/>
            <person name="Mulder N."/>
            <person name="Nakano N."/>
            <person name="Nakauchi H."/>
            <person name="Ng P."/>
            <person name="Nilsson R."/>
            <person name="Nishiguchi S."/>
            <person name="Nishikawa S."/>
            <person name="Nori F."/>
            <person name="Ohara O."/>
            <person name="Okazaki Y."/>
            <person name="Orlando V."/>
            <person name="Pang K.C."/>
            <person name="Pavan W.J."/>
            <person name="Pavesi G."/>
            <person name="Pesole G."/>
            <person name="Petrovsky N."/>
            <person name="Piazza S."/>
            <person name="Reed J."/>
            <person name="Reid J.F."/>
            <person name="Ring B.Z."/>
            <person name="Ringwald M."/>
            <person name="Rost B."/>
            <person name="Ruan Y."/>
            <person name="Salzberg S.L."/>
            <person name="Sandelin A."/>
            <person name="Schneider C."/>
            <person name="Schoenbach C."/>
            <person name="Sekiguchi K."/>
            <person name="Semple C.A."/>
            <person name="Seno S."/>
            <person name="Sessa L."/>
            <person name="Sheng Y."/>
            <person name="Shibata Y."/>
            <person name="Shimada H."/>
            <person name="Shimada K."/>
            <person name="Silva D."/>
            <person name="Sinclair B."/>
            <person name="Sperling S."/>
            <person name="Stupka E."/>
            <person name="Sugiura K."/>
            <person name="Sultana R."/>
            <person name="Takenaka Y."/>
            <person name="Taki K."/>
            <person name="Tammoja K."/>
            <person name="Tan S.L."/>
            <person name="Tang S."/>
            <person name="Taylor M.S."/>
            <person name="Tegner J."/>
            <person name="Teichmann S.A."/>
            <person name="Ueda H.R."/>
            <person name="van Nimwegen E."/>
            <person name="Verardo R."/>
            <person name="Wei C.L."/>
            <person name="Yagi K."/>
            <person name="Yamanishi H."/>
            <person name="Zabarovsky E."/>
            <person name="Zhu S."/>
            <person name="Zimmer A."/>
            <person name="Hide W."/>
            <person name="Bult C."/>
            <person name="Grimmond S.M."/>
            <person name="Teasdale R.D."/>
            <person name="Liu E.T."/>
            <person name="Brusic V."/>
            <person name="Quackenbush J."/>
            <person name="Wahlestedt C."/>
            <person name="Mattick J.S."/>
            <person name="Hume D.A."/>
            <person name="Kai C."/>
            <person name="Sasaki D."/>
            <person name="Tomaru Y."/>
            <person name="Fukuda S."/>
            <person name="Kanamori-Katayama M."/>
            <person name="Suzuki M."/>
            <person name="Aoki J."/>
            <person name="Arakawa T."/>
            <person name="Iida J."/>
            <person name="Imamura K."/>
            <person name="Itoh M."/>
            <person name="Kato T."/>
            <person name="Kawaji H."/>
            <person name="Kawagashira N."/>
            <person name="Kawashima T."/>
            <person name="Kojima M."/>
            <person name="Kondo S."/>
            <person name="Konno H."/>
            <person name="Nakano K."/>
            <person name="Ninomiya N."/>
            <person name="Nishio T."/>
            <person name="Okada M."/>
            <person name="Plessy C."/>
            <person name="Shibata K."/>
            <person name="Shiraki T."/>
            <person name="Suzuki S."/>
            <person name="Tagami M."/>
            <person name="Waki K."/>
            <person name="Watahiki A."/>
            <person name="Okamura-Oho Y."/>
            <person name="Suzuki H."/>
            <person name="Kawai J."/>
            <person name="Hayashizaki Y."/>
        </authorList>
    </citation>
    <scope>NUCLEOTIDE SEQUENCE [LARGE SCALE MRNA]</scope>
    <source>
        <strain>C57BL/6J</strain>
        <tissue>Small intestine</tissue>
    </source>
</reference>
<accession>Q9D844</accession>
<accession>O70278</accession>
<dbReference type="EMBL" id="AF036875">
    <property type="protein sequence ID" value="AAC40117.1"/>
    <property type="molecule type" value="mRNA"/>
</dbReference>
<dbReference type="EMBL" id="AK008507">
    <property type="protein sequence ID" value="BAB25707.1"/>
    <property type="molecule type" value="mRNA"/>
</dbReference>
<dbReference type="CCDS" id="CCDS50374.1"/>
<dbReference type="PIR" id="JE0170">
    <property type="entry name" value="JE0170"/>
</dbReference>
<dbReference type="RefSeq" id="NP_065591.1">
    <property type="nucleotide sequence ID" value="NM_020566.2"/>
</dbReference>
<dbReference type="SMR" id="Q9D844"/>
<dbReference type="FunCoup" id="Q9D844">
    <property type="interactions" value="584"/>
</dbReference>
<dbReference type="STRING" id="10090.ENSMUSP00000136062"/>
<dbReference type="iPTMnet" id="Q9D844"/>
<dbReference type="PhosphoSitePlus" id="Q9D844"/>
<dbReference type="PaxDb" id="10090-ENSMUSP00000025915"/>
<dbReference type="ProteomicsDB" id="277353"/>
<dbReference type="Pumba" id="Q9D844"/>
<dbReference type="Antibodypedia" id="2326">
    <property type="antibodies" value="60 antibodies from 14 providers"/>
</dbReference>
<dbReference type="DNASU" id="57431"/>
<dbReference type="Ensembl" id="ENSMUST00000179118.2">
    <property type="protein sequence ID" value="ENSMUSP00000136062.2"/>
    <property type="gene ID" value="ENSMUSG00000024963.13"/>
</dbReference>
<dbReference type="GeneID" id="57431"/>
<dbReference type="KEGG" id="mmu:57431"/>
<dbReference type="UCSC" id="uc008gjx.1">
    <property type="organism name" value="mouse"/>
</dbReference>
<dbReference type="AGR" id="MGI:1927346"/>
<dbReference type="CTD" id="3338"/>
<dbReference type="MGI" id="MGI:1927346">
    <property type="gene designation" value="Dnajc4"/>
</dbReference>
<dbReference type="VEuPathDB" id="HostDB:ENSMUSG00000024963"/>
<dbReference type="eggNOG" id="KOG0691">
    <property type="taxonomic scope" value="Eukaryota"/>
</dbReference>
<dbReference type="GeneTree" id="ENSGT00510000048574"/>
<dbReference type="InParanoid" id="Q9D844"/>
<dbReference type="OMA" id="LCRLWPY"/>
<dbReference type="PhylomeDB" id="Q9D844"/>
<dbReference type="BioGRID-ORCS" id="57431">
    <property type="hits" value="3 hits in 78 CRISPR screens"/>
</dbReference>
<dbReference type="PRO" id="PR:Q9D844"/>
<dbReference type="Proteomes" id="UP000000589">
    <property type="component" value="Chromosome 19"/>
</dbReference>
<dbReference type="RNAct" id="Q9D844">
    <property type="molecule type" value="protein"/>
</dbReference>
<dbReference type="Bgee" id="ENSMUSG00000024963">
    <property type="expression patterns" value="Expressed in interventricular septum and 258 other cell types or tissues"/>
</dbReference>
<dbReference type="ExpressionAtlas" id="Q9D844">
    <property type="expression patterns" value="baseline and differential"/>
</dbReference>
<dbReference type="GO" id="GO:0016020">
    <property type="term" value="C:membrane"/>
    <property type="evidence" value="ECO:0007669"/>
    <property type="project" value="UniProtKB-SubCell"/>
</dbReference>
<dbReference type="GO" id="GO:0005739">
    <property type="term" value="C:mitochondrion"/>
    <property type="evidence" value="ECO:0007005"/>
    <property type="project" value="MGI"/>
</dbReference>
<dbReference type="CDD" id="cd06257">
    <property type="entry name" value="DnaJ"/>
    <property type="match status" value="1"/>
</dbReference>
<dbReference type="FunFam" id="1.10.287.110:FF:000087">
    <property type="entry name" value="DnaJ homolog subfamily C member 4"/>
    <property type="match status" value="1"/>
</dbReference>
<dbReference type="Gene3D" id="1.10.287.110">
    <property type="entry name" value="DnaJ domain"/>
    <property type="match status" value="1"/>
</dbReference>
<dbReference type="InterPro" id="IPR052763">
    <property type="entry name" value="DnaJ_C4"/>
</dbReference>
<dbReference type="InterPro" id="IPR001623">
    <property type="entry name" value="DnaJ_domain"/>
</dbReference>
<dbReference type="InterPro" id="IPR036869">
    <property type="entry name" value="J_dom_sf"/>
</dbReference>
<dbReference type="PANTHER" id="PTHR44825">
    <property type="match status" value="1"/>
</dbReference>
<dbReference type="PANTHER" id="PTHR44825:SF1">
    <property type="entry name" value="DNAJ HOMOLOG SUBFAMILY C MEMBER 4"/>
    <property type="match status" value="1"/>
</dbReference>
<dbReference type="Pfam" id="PF00226">
    <property type="entry name" value="DnaJ"/>
    <property type="match status" value="1"/>
</dbReference>
<dbReference type="PRINTS" id="PR00625">
    <property type="entry name" value="JDOMAIN"/>
</dbReference>
<dbReference type="SMART" id="SM00271">
    <property type="entry name" value="DnaJ"/>
    <property type="match status" value="1"/>
</dbReference>
<dbReference type="SUPFAM" id="SSF46565">
    <property type="entry name" value="Chaperone J-domain"/>
    <property type="match status" value="1"/>
</dbReference>
<dbReference type="PROSITE" id="PS50076">
    <property type="entry name" value="DNAJ_2"/>
    <property type="match status" value="1"/>
</dbReference>
<feature type="chain" id="PRO_0000071050" description="DnaJ homolog subfamily C member 4">
    <location>
        <begin position="1"/>
        <end position="244"/>
    </location>
</feature>
<feature type="transmembrane region" description="Helical" evidence="1">
    <location>
        <begin position="159"/>
        <end position="178"/>
    </location>
</feature>
<feature type="domain" description="J" evidence="2">
    <location>
        <begin position="37"/>
        <end position="102"/>
    </location>
</feature>
<feature type="region of interest" description="Disordered" evidence="3">
    <location>
        <begin position="96"/>
        <end position="127"/>
    </location>
</feature>
<feature type="region of interest" description="Disordered" evidence="3">
    <location>
        <begin position="208"/>
        <end position="244"/>
    </location>
</feature>
<feature type="compositionally biased region" description="Polar residues" evidence="3">
    <location>
        <begin position="103"/>
        <end position="127"/>
    </location>
</feature>
<feature type="sequence conflict" description="In Ref. 2; BAB25707." evidence="4" ref="2">
    <original>S</original>
    <variation>SS</variation>
    <location>
        <position position="126"/>
    </location>
</feature>
<keyword id="KW-0143">Chaperone</keyword>
<keyword id="KW-0472">Membrane</keyword>
<keyword id="KW-1185">Reference proteome</keyword>
<keyword id="KW-0812">Transmembrane</keyword>
<keyword id="KW-1133">Transmembrane helix</keyword>
<protein>
    <recommendedName>
        <fullName>DnaJ homolog subfamily C member 4</fullName>
    </recommendedName>
    <alternativeName>
        <fullName>Multiple endocrine neoplasia type 1 candidate protein number 18 homolog</fullName>
    </alternativeName>
</protein>